<organism>
    <name type="scientific">Nostoc punctiforme (strain ATCC 29133 / PCC 73102)</name>
    <dbReference type="NCBI Taxonomy" id="63737"/>
    <lineage>
        <taxon>Bacteria</taxon>
        <taxon>Bacillati</taxon>
        <taxon>Cyanobacteriota</taxon>
        <taxon>Cyanophyceae</taxon>
        <taxon>Nostocales</taxon>
        <taxon>Nostocaceae</taxon>
        <taxon>Nostoc</taxon>
    </lineage>
</organism>
<dbReference type="EMBL" id="CP001037">
    <property type="protein sequence ID" value="ACC81694.1"/>
    <property type="molecule type" value="Genomic_DNA"/>
</dbReference>
<dbReference type="RefSeq" id="WP_012409673.1">
    <property type="nucleotide sequence ID" value="NC_010628.1"/>
</dbReference>
<dbReference type="SMR" id="B2IYW1"/>
<dbReference type="STRING" id="63737.Npun_F3251"/>
<dbReference type="EnsemblBacteria" id="ACC81694">
    <property type="protein sequence ID" value="ACC81694"/>
    <property type="gene ID" value="Npun_F3251"/>
</dbReference>
<dbReference type="KEGG" id="npu:Npun_F3251"/>
<dbReference type="eggNOG" id="COG0323">
    <property type="taxonomic scope" value="Bacteria"/>
</dbReference>
<dbReference type="HOGENOM" id="CLU_004131_4_1_3"/>
<dbReference type="OrthoDB" id="9763467at2"/>
<dbReference type="PhylomeDB" id="B2IYW1"/>
<dbReference type="Proteomes" id="UP000001191">
    <property type="component" value="Chromosome"/>
</dbReference>
<dbReference type="GO" id="GO:0032300">
    <property type="term" value="C:mismatch repair complex"/>
    <property type="evidence" value="ECO:0007669"/>
    <property type="project" value="InterPro"/>
</dbReference>
<dbReference type="GO" id="GO:0005524">
    <property type="term" value="F:ATP binding"/>
    <property type="evidence" value="ECO:0007669"/>
    <property type="project" value="InterPro"/>
</dbReference>
<dbReference type="GO" id="GO:0016887">
    <property type="term" value="F:ATP hydrolysis activity"/>
    <property type="evidence" value="ECO:0007669"/>
    <property type="project" value="InterPro"/>
</dbReference>
<dbReference type="GO" id="GO:0140664">
    <property type="term" value="F:ATP-dependent DNA damage sensor activity"/>
    <property type="evidence" value="ECO:0007669"/>
    <property type="project" value="InterPro"/>
</dbReference>
<dbReference type="GO" id="GO:0030983">
    <property type="term" value="F:mismatched DNA binding"/>
    <property type="evidence" value="ECO:0007669"/>
    <property type="project" value="InterPro"/>
</dbReference>
<dbReference type="GO" id="GO:0006298">
    <property type="term" value="P:mismatch repair"/>
    <property type="evidence" value="ECO:0007669"/>
    <property type="project" value="UniProtKB-UniRule"/>
</dbReference>
<dbReference type="CDD" id="cd16926">
    <property type="entry name" value="HATPase_MutL-MLH-PMS-like"/>
    <property type="match status" value="1"/>
</dbReference>
<dbReference type="CDD" id="cd00782">
    <property type="entry name" value="MutL_Trans"/>
    <property type="match status" value="1"/>
</dbReference>
<dbReference type="FunFam" id="3.30.565.10:FF:000003">
    <property type="entry name" value="DNA mismatch repair endonuclease MutL"/>
    <property type="match status" value="1"/>
</dbReference>
<dbReference type="Gene3D" id="3.30.230.10">
    <property type="match status" value="1"/>
</dbReference>
<dbReference type="Gene3D" id="3.30.565.10">
    <property type="entry name" value="Histidine kinase-like ATPase, C-terminal domain"/>
    <property type="match status" value="1"/>
</dbReference>
<dbReference type="Gene3D" id="3.30.1540.20">
    <property type="entry name" value="MutL, C-terminal domain, dimerisation subdomain"/>
    <property type="match status" value="1"/>
</dbReference>
<dbReference type="Gene3D" id="3.30.1370.100">
    <property type="entry name" value="MutL, C-terminal domain, regulatory subdomain"/>
    <property type="match status" value="1"/>
</dbReference>
<dbReference type="HAMAP" id="MF_00149">
    <property type="entry name" value="DNA_mis_repair"/>
    <property type="match status" value="1"/>
</dbReference>
<dbReference type="InterPro" id="IPR014762">
    <property type="entry name" value="DNA_mismatch_repair_CS"/>
</dbReference>
<dbReference type="InterPro" id="IPR020667">
    <property type="entry name" value="DNA_mismatch_repair_MutL"/>
</dbReference>
<dbReference type="InterPro" id="IPR013507">
    <property type="entry name" value="DNA_mismatch_S5_2-like"/>
</dbReference>
<dbReference type="InterPro" id="IPR036890">
    <property type="entry name" value="HATPase_C_sf"/>
</dbReference>
<dbReference type="InterPro" id="IPR002099">
    <property type="entry name" value="MutL/Mlh/PMS"/>
</dbReference>
<dbReference type="InterPro" id="IPR038973">
    <property type="entry name" value="MutL/Mlh/Pms-like"/>
</dbReference>
<dbReference type="InterPro" id="IPR014790">
    <property type="entry name" value="MutL_C"/>
</dbReference>
<dbReference type="InterPro" id="IPR042120">
    <property type="entry name" value="MutL_C_dimsub"/>
</dbReference>
<dbReference type="InterPro" id="IPR042121">
    <property type="entry name" value="MutL_C_regsub"/>
</dbReference>
<dbReference type="InterPro" id="IPR037198">
    <property type="entry name" value="MutL_C_sf"/>
</dbReference>
<dbReference type="InterPro" id="IPR020568">
    <property type="entry name" value="Ribosomal_Su5_D2-typ_SF"/>
</dbReference>
<dbReference type="InterPro" id="IPR014721">
    <property type="entry name" value="Ribsml_uS5_D2-typ_fold_subgr"/>
</dbReference>
<dbReference type="NCBIfam" id="TIGR00585">
    <property type="entry name" value="mutl"/>
    <property type="match status" value="1"/>
</dbReference>
<dbReference type="NCBIfam" id="NF000951">
    <property type="entry name" value="PRK00095.2-1"/>
    <property type="match status" value="1"/>
</dbReference>
<dbReference type="PANTHER" id="PTHR10073">
    <property type="entry name" value="DNA MISMATCH REPAIR PROTEIN MLH, PMS, MUTL"/>
    <property type="match status" value="1"/>
</dbReference>
<dbReference type="PANTHER" id="PTHR10073:SF12">
    <property type="entry name" value="DNA MISMATCH REPAIR PROTEIN MLH1"/>
    <property type="match status" value="1"/>
</dbReference>
<dbReference type="Pfam" id="PF01119">
    <property type="entry name" value="DNA_mis_repair"/>
    <property type="match status" value="1"/>
</dbReference>
<dbReference type="Pfam" id="PF13589">
    <property type="entry name" value="HATPase_c_3"/>
    <property type="match status" value="1"/>
</dbReference>
<dbReference type="Pfam" id="PF08676">
    <property type="entry name" value="MutL_C"/>
    <property type="match status" value="1"/>
</dbReference>
<dbReference type="SMART" id="SM01340">
    <property type="entry name" value="DNA_mis_repair"/>
    <property type="match status" value="1"/>
</dbReference>
<dbReference type="SMART" id="SM00853">
    <property type="entry name" value="MutL_C"/>
    <property type="match status" value="1"/>
</dbReference>
<dbReference type="SUPFAM" id="SSF55874">
    <property type="entry name" value="ATPase domain of HSP90 chaperone/DNA topoisomerase II/histidine kinase"/>
    <property type="match status" value="1"/>
</dbReference>
<dbReference type="SUPFAM" id="SSF118116">
    <property type="entry name" value="DNA mismatch repair protein MutL"/>
    <property type="match status" value="1"/>
</dbReference>
<dbReference type="SUPFAM" id="SSF54211">
    <property type="entry name" value="Ribosomal protein S5 domain 2-like"/>
    <property type="match status" value="1"/>
</dbReference>
<dbReference type="PROSITE" id="PS00058">
    <property type="entry name" value="DNA_MISMATCH_REPAIR_1"/>
    <property type="match status" value="1"/>
</dbReference>
<gene>
    <name evidence="1" type="primary">mutL</name>
    <name type="ordered locus">Npun_F3251</name>
</gene>
<protein>
    <recommendedName>
        <fullName evidence="1">DNA mismatch repair protein MutL</fullName>
    </recommendedName>
</protein>
<reference key="1">
    <citation type="journal article" date="2013" name="Plant Physiol.">
        <title>A Nostoc punctiforme Sugar Transporter Necessary to Establish a Cyanobacterium-Plant Symbiosis.</title>
        <authorList>
            <person name="Ekman M."/>
            <person name="Picossi S."/>
            <person name="Campbell E.L."/>
            <person name="Meeks J.C."/>
            <person name="Flores E."/>
        </authorList>
    </citation>
    <scope>NUCLEOTIDE SEQUENCE [LARGE SCALE GENOMIC DNA]</scope>
    <source>
        <strain>ATCC 29133 / PCC 73102</strain>
    </source>
</reference>
<sequence>MASIIQALPTEVVYLITAGEVIDSLASVVRELVENSLDAGATRIVVSLWPQQWRIRVADNGCGMNLDDLQQAATAHSTSKIRSSADLWKINSLGFRGEALHSLTTLADLEILSRPVDGKLGWRISYGNGGKVVQVEVTAIAPGTVVTVSNLFGNCSSRRQGLPTTAQQMKAVQATIYQIALCHPHVTWQIWQNDRQWFTISPARTTGQLLPQILPQVRQGDLQEVKLEIPNPPHSPLPCTNAIHRVSPHSALTLVVGLPDRCHRHRPDWVRVAINGRMVKTPELEQTILSAFHRTLPRDRYPICFLHLAISPDQINWNRNPAKTEIYLNEIIYWQEQITQAINQALSISSSNLKEAVHTTRVSKLLKAAEAKGGYNFNPQNPKEDRKNPNSLKAVAQVSNTYIVAEHPGGMWLVEQHIAHERVLYEQLCDDWQLVPVEPPIILYQLSLAQVSQLQRIGLDIESFGEQLWAVRNIPAPLQQRDDCAEAILELSWGGDLQTAQVAVACRSAIRNGTPMNQQEMQTLLDNWQRTRNPRTCPHGRPIYLSLEESALARFFRRNWVIGKSHGI</sequence>
<proteinExistence type="inferred from homology"/>
<feature type="chain" id="PRO_1000096667" description="DNA mismatch repair protein MutL">
    <location>
        <begin position="1"/>
        <end position="568"/>
    </location>
</feature>
<evidence type="ECO:0000255" key="1">
    <source>
        <dbReference type="HAMAP-Rule" id="MF_00149"/>
    </source>
</evidence>
<comment type="function">
    <text evidence="1">This protein is involved in the repair of mismatches in DNA. It is required for dam-dependent methyl-directed DNA mismatch repair. May act as a 'molecular matchmaker', a protein that promotes the formation of a stable complex between two or more DNA-binding proteins in an ATP-dependent manner without itself being part of a final effector complex.</text>
</comment>
<comment type="similarity">
    <text evidence="1">Belongs to the DNA mismatch repair MutL/HexB family.</text>
</comment>
<keyword id="KW-0227">DNA damage</keyword>
<keyword id="KW-0234">DNA repair</keyword>
<keyword id="KW-1185">Reference proteome</keyword>
<name>MUTL_NOSP7</name>
<accession>B2IYW1</accession>